<sequence>MAKASARVIITMACTDCKNRNYSTYKNKKNDSGRLELRKFCPTCGHHTLHRETR</sequence>
<accession>Q67JS5</accession>
<dbReference type="EMBL" id="AP006840">
    <property type="protein sequence ID" value="BAD42075.1"/>
    <property type="molecule type" value="Genomic_DNA"/>
</dbReference>
<dbReference type="RefSeq" id="WP_011197208.1">
    <property type="nucleotide sequence ID" value="NC_006177.1"/>
</dbReference>
<dbReference type="SMR" id="Q67JS5"/>
<dbReference type="STRING" id="292459.STH3093"/>
<dbReference type="KEGG" id="sth:STH3093"/>
<dbReference type="eggNOG" id="COG0267">
    <property type="taxonomic scope" value="Bacteria"/>
</dbReference>
<dbReference type="HOGENOM" id="CLU_190949_0_2_9"/>
<dbReference type="OrthoDB" id="9801333at2"/>
<dbReference type="Proteomes" id="UP000000417">
    <property type="component" value="Chromosome"/>
</dbReference>
<dbReference type="GO" id="GO:0005737">
    <property type="term" value="C:cytoplasm"/>
    <property type="evidence" value="ECO:0007669"/>
    <property type="project" value="UniProtKB-ARBA"/>
</dbReference>
<dbReference type="GO" id="GO:1990904">
    <property type="term" value="C:ribonucleoprotein complex"/>
    <property type="evidence" value="ECO:0007669"/>
    <property type="project" value="UniProtKB-KW"/>
</dbReference>
<dbReference type="GO" id="GO:0005840">
    <property type="term" value="C:ribosome"/>
    <property type="evidence" value="ECO:0007669"/>
    <property type="project" value="UniProtKB-KW"/>
</dbReference>
<dbReference type="GO" id="GO:0003735">
    <property type="term" value="F:structural constituent of ribosome"/>
    <property type="evidence" value="ECO:0007669"/>
    <property type="project" value="InterPro"/>
</dbReference>
<dbReference type="GO" id="GO:0006412">
    <property type="term" value="P:translation"/>
    <property type="evidence" value="ECO:0007669"/>
    <property type="project" value="UniProtKB-UniRule"/>
</dbReference>
<dbReference type="Gene3D" id="2.20.28.120">
    <property type="entry name" value="Ribosomal protein L33"/>
    <property type="match status" value="1"/>
</dbReference>
<dbReference type="HAMAP" id="MF_00294">
    <property type="entry name" value="Ribosomal_bL33"/>
    <property type="match status" value="1"/>
</dbReference>
<dbReference type="InterPro" id="IPR001705">
    <property type="entry name" value="Ribosomal_bL33"/>
</dbReference>
<dbReference type="InterPro" id="IPR018264">
    <property type="entry name" value="Ribosomal_bL33_CS"/>
</dbReference>
<dbReference type="InterPro" id="IPR038584">
    <property type="entry name" value="Ribosomal_bL33_sf"/>
</dbReference>
<dbReference type="InterPro" id="IPR011332">
    <property type="entry name" value="Ribosomal_zn-bd"/>
</dbReference>
<dbReference type="NCBIfam" id="NF001764">
    <property type="entry name" value="PRK00504.1"/>
    <property type="match status" value="1"/>
</dbReference>
<dbReference type="NCBIfam" id="NF001860">
    <property type="entry name" value="PRK00595.1"/>
    <property type="match status" value="1"/>
</dbReference>
<dbReference type="NCBIfam" id="TIGR01023">
    <property type="entry name" value="rpmG_bact"/>
    <property type="match status" value="1"/>
</dbReference>
<dbReference type="PANTHER" id="PTHR43168">
    <property type="entry name" value="50S RIBOSOMAL PROTEIN L33, CHLOROPLASTIC"/>
    <property type="match status" value="1"/>
</dbReference>
<dbReference type="PANTHER" id="PTHR43168:SF2">
    <property type="entry name" value="LARGE RIBOSOMAL SUBUNIT PROTEIN BL33C"/>
    <property type="match status" value="1"/>
</dbReference>
<dbReference type="Pfam" id="PF00471">
    <property type="entry name" value="Ribosomal_L33"/>
    <property type="match status" value="1"/>
</dbReference>
<dbReference type="SUPFAM" id="SSF57829">
    <property type="entry name" value="Zn-binding ribosomal proteins"/>
    <property type="match status" value="1"/>
</dbReference>
<dbReference type="PROSITE" id="PS00582">
    <property type="entry name" value="RIBOSOMAL_L33"/>
    <property type="match status" value="1"/>
</dbReference>
<protein>
    <recommendedName>
        <fullName evidence="1">Large ribosomal subunit protein bL33</fullName>
    </recommendedName>
    <alternativeName>
        <fullName evidence="2">50S ribosomal protein L33</fullName>
    </alternativeName>
</protein>
<name>RL33_SYMTH</name>
<keyword id="KW-1185">Reference proteome</keyword>
<keyword id="KW-0687">Ribonucleoprotein</keyword>
<keyword id="KW-0689">Ribosomal protein</keyword>
<proteinExistence type="inferred from homology"/>
<evidence type="ECO:0000255" key="1">
    <source>
        <dbReference type="HAMAP-Rule" id="MF_00294"/>
    </source>
</evidence>
<evidence type="ECO:0000305" key="2"/>
<gene>
    <name evidence="1" type="primary">rpmG</name>
    <name type="ordered locus">STH3093</name>
</gene>
<feature type="chain" id="PRO_0000356757" description="Large ribosomal subunit protein bL33">
    <location>
        <begin position="1"/>
        <end position="54"/>
    </location>
</feature>
<reference key="1">
    <citation type="journal article" date="2004" name="Nucleic Acids Res.">
        <title>Genome sequence of Symbiobacterium thermophilum, an uncultivable bacterium that depends on microbial commensalism.</title>
        <authorList>
            <person name="Ueda K."/>
            <person name="Yamashita A."/>
            <person name="Ishikawa J."/>
            <person name="Shimada M."/>
            <person name="Watsuji T."/>
            <person name="Morimura K."/>
            <person name="Ikeda H."/>
            <person name="Hattori M."/>
            <person name="Beppu T."/>
        </authorList>
    </citation>
    <scope>NUCLEOTIDE SEQUENCE [LARGE SCALE GENOMIC DNA]</scope>
    <source>
        <strain>DSM 24528 / JCM 14929 / IAM 14863 / T</strain>
    </source>
</reference>
<organism>
    <name type="scientific">Symbiobacterium thermophilum (strain DSM 24528 / JCM 14929 / IAM 14863 / T)</name>
    <dbReference type="NCBI Taxonomy" id="292459"/>
    <lineage>
        <taxon>Bacteria</taxon>
        <taxon>Bacillati</taxon>
        <taxon>Bacillota</taxon>
        <taxon>Clostridia</taxon>
        <taxon>Eubacteriales</taxon>
        <taxon>Symbiobacteriaceae</taxon>
        <taxon>Symbiobacterium</taxon>
    </lineage>
</organism>
<comment type="similarity">
    <text evidence="1">Belongs to the bacterial ribosomal protein bL33 family.</text>
</comment>